<organism>
    <name type="scientific">Homo sapiens</name>
    <name type="common">Human</name>
    <dbReference type="NCBI Taxonomy" id="9606"/>
    <lineage>
        <taxon>Eukaryota</taxon>
        <taxon>Metazoa</taxon>
        <taxon>Chordata</taxon>
        <taxon>Craniata</taxon>
        <taxon>Vertebrata</taxon>
        <taxon>Euteleostomi</taxon>
        <taxon>Mammalia</taxon>
        <taxon>Eutheria</taxon>
        <taxon>Euarchontoglires</taxon>
        <taxon>Primates</taxon>
        <taxon>Haplorrhini</taxon>
        <taxon>Catarrhini</taxon>
        <taxon>Hominidae</taxon>
        <taxon>Homo</taxon>
    </lineage>
</organism>
<name>ZFAN5_HUMAN</name>
<gene>
    <name type="primary">ZFAND5</name>
    <name type="synonym">ZA20D2</name>
    <name type="synonym">ZNF216</name>
</gene>
<proteinExistence type="evidence at protein level"/>
<protein>
    <recommendedName>
        <fullName>AN1-type zinc finger protein 5</fullName>
    </recommendedName>
    <alternativeName>
        <fullName>Zinc finger A20 domain-containing protein 2</fullName>
    </alternativeName>
    <alternativeName>
        <fullName>Zinc finger protein 216</fullName>
    </alternativeName>
</protein>
<keyword id="KW-0002">3D-structure</keyword>
<keyword id="KW-0007">Acetylation</keyword>
<keyword id="KW-0963">Cytoplasm</keyword>
<keyword id="KW-0479">Metal-binding</keyword>
<keyword id="KW-0597">Phosphoprotein</keyword>
<keyword id="KW-1267">Proteomics identification</keyword>
<keyword id="KW-1185">Reference proteome</keyword>
<keyword id="KW-0833">Ubl conjugation pathway</keyword>
<keyword id="KW-0862">Zinc</keyword>
<keyword id="KW-0863">Zinc-finger</keyword>
<comment type="function">
    <text evidence="6">Involved in protein degradation via the ubiquitin-proteasome system. May act by anchoring ubiquitinated proteins to the proteasome. Plays a role in ubiquitin-mediated protein degradation during muscle atrophy. Plays a role in the regulation of NF-kappa-B activation and apoptosis. Inhibits NF-kappa-B activation triggered by overexpression of RIPK1 and TRAF6 but not of RELA. Also inhibits tumor necrosis factor (TNF), IL-1 and TLR4-induced NF-kappa-B activation in a dose-dependent manner. Overexpression sensitizes cells to TNF-induced apoptosis. Is a potent inhibitory factor for osteoclast differentiation.</text>
</comment>
<comment type="subunit">
    <text evidence="1 6">Interacts with ubiquitin and polyubiquitinated proteins. Identified in a heterotrimeric complex with ubiquitin and SQSTM1, where ZFAND5 and SQSTM1 both interact with the same ubiquitin molecule (By similarity). Homooligomer and/or heterooligomer. Interacts (via A20-type domain) with IKBKG and RIPK1 and with TRAF6 (via AN1-type domain).</text>
</comment>
<comment type="interaction">
    <interactant intactId="EBI-8028844">
        <id>O76080</id>
    </interactant>
    <interactant intactId="EBI-2512818">
        <id>Q12798</id>
        <label>CETN1</label>
    </interactant>
    <organismsDiffer>false</organismsDiffer>
    <experiments>2</experiments>
</comment>
<comment type="interaction">
    <interactant intactId="EBI-8028844">
        <id>O76080</id>
    </interactant>
    <interactant intactId="EBI-3390054">
        <id>P0CG48</id>
        <label>UBC</label>
    </interactant>
    <organismsDiffer>false</organismsDiffer>
    <experiments>3</experiments>
</comment>
<comment type="subcellular location">
    <subcellularLocation>
        <location evidence="1">Cytoplasm</location>
    </subcellularLocation>
</comment>
<comment type="tissue specificity">
    <text evidence="6 7">Highly expressed in skeletal muscle. Expressed in fetal cochlea. Also expressed in infant brain, fetal heart, pancreatic islet, melanocyte, pineal gland, placenta, corneal stroma, and parathyroid tumor. Weakly expressed or undetectable in adult brain, heart, colon, thymus, spleen, kidney, liver, small intestine, placenta, lung and peripheral blood leukocytes. Expressed in rhabdomyosarcoma RD cells (at protein level).</text>
</comment>
<comment type="domain">
    <text evidence="1">The A20-type zinc finger directly binds polyubiquitin chains and associates with the 26S proteasome. The zinc-finger A20-type domain is essential for inhibition of NF-kappa-B activation (By similarity).</text>
</comment>
<accession>O76080</accession>
<accession>A8K484</accession>
<sequence>MAQETNQTPGPMLCSTGCGFYGNPRTNGMCSVCYKEHLQRQQNSGRMSPMGTASGSNSPTSDSASVQRADTSLNNCEGAAGSTSEKSRNVPVAALPVTQQMTEMSISREDKITTPKTEVSEPVVTQPSPSVSQPSTSQSEEKAPELPKPKKNRCFMCRKKVGLTGFDCRCGNLFCGLHRYSDKHNCPYDYKAEAAAKIRKENPVVVAEKIQRI</sequence>
<dbReference type="EMBL" id="AF062072">
    <property type="protein sequence ID" value="AAC61801.1"/>
    <property type="molecule type" value="Genomic_DNA"/>
</dbReference>
<dbReference type="EMBL" id="AF062346">
    <property type="protein sequence ID" value="AAC42601.1"/>
    <property type="molecule type" value="mRNA"/>
</dbReference>
<dbReference type="EMBL" id="AF062347">
    <property type="protein sequence ID" value="AAC42602.1"/>
    <property type="molecule type" value="mRNA"/>
</dbReference>
<dbReference type="EMBL" id="AK290849">
    <property type="protein sequence ID" value="BAF83538.1"/>
    <property type="molecule type" value="mRNA"/>
</dbReference>
<dbReference type="EMBL" id="AL135924">
    <property type="status" value="NOT_ANNOTATED_CDS"/>
    <property type="molecule type" value="Genomic_DNA"/>
</dbReference>
<dbReference type="EMBL" id="CH471089">
    <property type="protein sequence ID" value="EAW62533.1"/>
    <property type="molecule type" value="Genomic_DNA"/>
</dbReference>
<dbReference type="EMBL" id="BC011018">
    <property type="protein sequence ID" value="AAH11018.1"/>
    <property type="molecule type" value="mRNA"/>
</dbReference>
<dbReference type="EMBL" id="BC027707">
    <property type="protein sequence ID" value="AAH27707.1"/>
    <property type="molecule type" value="mRNA"/>
</dbReference>
<dbReference type="EMBL" id="BC073131">
    <property type="protein sequence ID" value="AAH73131.1"/>
    <property type="molecule type" value="mRNA"/>
</dbReference>
<dbReference type="CCDS" id="CCDS6642.1"/>
<dbReference type="RefSeq" id="NP_001095890.1">
    <property type="nucleotide sequence ID" value="NM_001102420.3"/>
</dbReference>
<dbReference type="RefSeq" id="NP_001095891.1">
    <property type="nucleotide sequence ID" value="NM_001102421.3"/>
</dbReference>
<dbReference type="RefSeq" id="NP_001265172.1">
    <property type="nucleotide sequence ID" value="NM_001278243.2"/>
</dbReference>
<dbReference type="RefSeq" id="NP_001265173.1">
    <property type="nucleotide sequence ID" value="NM_001278244.1"/>
</dbReference>
<dbReference type="RefSeq" id="NP_001265174.1">
    <property type="nucleotide sequence ID" value="NM_001278245.2"/>
</dbReference>
<dbReference type="RefSeq" id="NP_005998.1">
    <property type="nucleotide sequence ID" value="NM_006007.4"/>
</dbReference>
<dbReference type="RefSeq" id="XP_047279809.1">
    <property type="nucleotide sequence ID" value="XM_047423853.1"/>
</dbReference>
<dbReference type="RefSeq" id="XP_054219743.1">
    <property type="nucleotide sequence ID" value="XM_054363768.1"/>
</dbReference>
<dbReference type="PDB" id="7QXW">
    <property type="method" value="EM"/>
    <property type="resolution" value="4.10 A"/>
    <property type="chains" value="v=1-213"/>
</dbReference>
<dbReference type="PDBsum" id="7QXW"/>
<dbReference type="BMRB" id="O76080"/>
<dbReference type="EMDB" id="EMD-14204"/>
<dbReference type="SMR" id="O76080"/>
<dbReference type="BioGRID" id="113546">
    <property type="interactions" value="34"/>
</dbReference>
<dbReference type="FunCoup" id="O76080">
    <property type="interactions" value="79"/>
</dbReference>
<dbReference type="IntAct" id="O76080">
    <property type="interactions" value="12"/>
</dbReference>
<dbReference type="MINT" id="O76080"/>
<dbReference type="STRING" id="9606.ENSP00000366161"/>
<dbReference type="iPTMnet" id="O76080"/>
<dbReference type="PhosphoSitePlus" id="O76080"/>
<dbReference type="BioMuta" id="ZFAND5"/>
<dbReference type="jPOST" id="O76080"/>
<dbReference type="MassIVE" id="O76080"/>
<dbReference type="PaxDb" id="9606-ENSP00000237937"/>
<dbReference type="PeptideAtlas" id="O76080"/>
<dbReference type="ProteomicsDB" id="50381"/>
<dbReference type="Pumba" id="O76080"/>
<dbReference type="TopDownProteomics" id="O76080"/>
<dbReference type="Antibodypedia" id="12564">
    <property type="antibodies" value="237 antibodies from 17 providers"/>
</dbReference>
<dbReference type="DNASU" id="7763"/>
<dbReference type="Ensembl" id="ENST00000237937.7">
    <property type="protein sequence ID" value="ENSP00000237937.3"/>
    <property type="gene ID" value="ENSG00000107372.13"/>
</dbReference>
<dbReference type="Ensembl" id="ENST00000343431.6">
    <property type="protein sequence ID" value="ENSP00000350586.2"/>
    <property type="gene ID" value="ENSG00000107372.13"/>
</dbReference>
<dbReference type="Ensembl" id="ENST00000376960.8">
    <property type="protein sequence ID" value="ENSP00000366159.4"/>
    <property type="gene ID" value="ENSG00000107372.13"/>
</dbReference>
<dbReference type="Ensembl" id="ENST00000376962.10">
    <property type="protein sequence ID" value="ENSP00000366161.5"/>
    <property type="gene ID" value="ENSG00000107372.13"/>
</dbReference>
<dbReference type="GeneID" id="7763"/>
<dbReference type="KEGG" id="hsa:7763"/>
<dbReference type="MANE-Select" id="ENST00000376962.10">
    <property type="protein sequence ID" value="ENSP00000366161.5"/>
    <property type="RefSeq nucleotide sequence ID" value="NM_001102420.3"/>
    <property type="RefSeq protein sequence ID" value="NP_001095890.1"/>
</dbReference>
<dbReference type="UCSC" id="uc004aix.3">
    <property type="organism name" value="human"/>
</dbReference>
<dbReference type="AGR" id="HGNC:13008"/>
<dbReference type="CTD" id="7763"/>
<dbReference type="DisGeNET" id="7763"/>
<dbReference type="GeneCards" id="ZFAND5"/>
<dbReference type="HGNC" id="HGNC:13008">
    <property type="gene designation" value="ZFAND5"/>
</dbReference>
<dbReference type="HPA" id="ENSG00000107372">
    <property type="expression patterns" value="Tissue enhanced (skeletal)"/>
</dbReference>
<dbReference type="MIM" id="604761">
    <property type="type" value="gene"/>
</dbReference>
<dbReference type="neXtProt" id="NX_O76080"/>
<dbReference type="OpenTargets" id="ENSG00000107372"/>
<dbReference type="PharmGKB" id="PA37587"/>
<dbReference type="VEuPathDB" id="HostDB:ENSG00000107372"/>
<dbReference type="eggNOG" id="KOG3173">
    <property type="taxonomic scope" value="Eukaryota"/>
</dbReference>
<dbReference type="GeneTree" id="ENSGT00940000156165"/>
<dbReference type="HOGENOM" id="CLU_057016_1_0_1"/>
<dbReference type="InParanoid" id="O76080"/>
<dbReference type="OMA" id="VLCENNC"/>
<dbReference type="OrthoDB" id="428577at2759"/>
<dbReference type="PAN-GO" id="O76080">
    <property type="GO annotations" value="0 GO annotations based on evolutionary models"/>
</dbReference>
<dbReference type="PhylomeDB" id="O76080"/>
<dbReference type="TreeFam" id="TF313612"/>
<dbReference type="PathwayCommons" id="O76080"/>
<dbReference type="SignaLink" id="O76080"/>
<dbReference type="SIGNOR" id="O76080"/>
<dbReference type="BioGRID-ORCS" id="7763">
    <property type="hits" value="45 hits in 1125 CRISPR screens"/>
</dbReference>
<dbReference type="ChiTaRS" id="ZFAND5">
    <property type="organism name" value="human"/>
</dbReference>
<dbReference type="GenomeRNAi" id="7763"/>
<dbReference type="Pharos" id="O76080">
    <property type="development level" value="Tbio"/>
</dbReference>
<dbReference type="PRO" id="PR:O76080"/>
<dbReference type="Proteomes" id="UP000005640">
    <property type="component" value="Chromosome 9"/>
</dbReference>
<dbReference type="RNAct" id="O76080">
    <property type="molecule type" value="protein"/>
</dbReference>
<dbReference type="Bgee" id="ENSG00000107372">
    <property type="expression patterns" value="Expressed in mucosa of paranasal sinus and 208 other cell types or tissues"/>
</dbReference>
<dbReference type="ExpressionAtlas" id="O76080">
    <property type="expression patterns" value="baseline and differential"/>
</dbReference>
<dbReference type="GO" id="GO:0005737">
    <property type="term" value="C:cytoplasm"/>
    <property type="evidence" value="ECO:0007669"/>
    <property type="project" value="UniProtKB-SubCell"/>
</dbReference>
<dbReference type="GO" id="GO:0003677">
    <property type="term" value="F:DNA binding"/>
    <property type="evidence" value="ECO:0007669"/>
    <property type="project" value="InterPro"/>
</dbReference>
<dbReference type="GO" id="GO:0008270">
    <property type="term" value="F:zinc ion binding"/>
    <property type="evidence" value="ECO:0007669"/>
    <property type="project" value="UniProtKB-KW"/>
</dbReference>
<dbReference type="GO" id="GO:0060324">
    <property type="term" value="P:face development"/>
    <property type="evidence" value="ECO:0007669"/>
    <property type="project" value="Ensembl"/>
</dbReference>
<dbReference type="GO" id="GO:0010761">
    <property type="term" value="P:fibroblast migration"/>
    <property type="evidence" value="ECO:0007669"/>
    <property type="project" value="Ensembl"/>
</dbReference>
<dbReference type="GO" id="GO:0001701">
    <property type="term" value="P:in utero embryonic development"/>
    <property type="evidence" value="ECO:0007669"/>
    <property type="project" value="Ensembl"/>
</dbReference>
<dbReference type="GO" id="GO:0048008">
    <property type="term" value="P:platelet-derived growth factor receptor signaling pathway"/>
    <property type="evidence" value="ECO:0007669"/>
    <property type="project" value="Ensembl"/>
</dbReference>
<dbReference type="GO" id="GO:0003016">
    <property type="term" value="P:respiratory system process"/>
    <property type="evidence" value="ECO:0007669"/>
    <property type="project" value="Ensembl"/>
</dbReference>
<dbReference type="GO" id="GO:0048705">
    <property type="term" value="P:skeletal system morphogenesis"/>
    <property type="evidence" value="ECO:0007669"/>
    <property type="project" value="Ensembl"/>
</dbReference>
<dbReference type="GO" id="GO:0048745">
    <property type="term" value="P:smooth muscle tissue development"/>
    <property type="evidence" value="ECO:0007669"/>
    <property type="project" value="Ensembl"/>
</dbReference>
<dbReference type="GO" id="GO:0001944">
    <property type="term" value="P:vasculature development"/>
    <property type="evidence" value="ECO:0007669"/>
    <property type="project" value="Ensembl"/>
</dbReference>
<dbReference type="FunFam" id="1.20.5.4770:FF:000001">
    <property type="entry name" value="Zinc finger AN1-type containing 6"/>
    <property type="match status" value="1"/>
</dbReference>
<dbReference type="FunFam" id="4.10.1110.10:FF:000001">
    <property type="entry name" value="Zinc finger AN1-type containing 6"/>
    <property type="match status" value="1"/>
</dbReference>
<dbReference type="Gene3D" id="1.20.5.4770">
    <property type="match status" value="1"/>
</dbReference>
<dbReference type="Gene3D" id="4.10.1110.10">
    <property type="entry name" value="AN1-like Zinc finger"/>
    <property type="match status" value="1"/>
</dbReference>
<dbReference type="InterPro" id="IPR035896">
    <property type="entry name" value="AN1-like_Znf"/>
</dbReference>
<dbReference type="InterPro" id="IPR050652">
    <property type="entry name" value="AN1_A20_ZnFinger"/>
</dbReference>
<dbReference type="InterPro" id="IPR002653">
    <property type="entry name" value="Znf_A20"/>
</dbReference>
<dbReference type="InterPro" id="IPR000058">
    <property type="entry name" value="Znf_AN1"/>
</dbReference>
<dbReference type="PANTHER" id="PTHR10634">
    <property type="entry name" value="AN1-TYPE ZINC FINGER PROTEIN"/>
    <property type="match status" value="1"/>
</dbReference>
<dbReference type="PANTHER" id="PTHR10634:SF26">
    <property type="entry name" value="AN1-TYPE ZINC FINGER PROTEIN 5"/>
    <property type="match status" value="1"/>
</dbReference>
<dbReference type="Pfam" id="PF01754">
    <property type="entry name" value="zf-A20"/>
    <property type="match status" value="1"/>
</dbReference>
<dbReference type="Pfam" id="PF01428">
    <property type="entry name" value="zf-AN1"/>
    <property type="match status" value="1"/>
</dbReference>
<dbReference type="SMART" id="SM00259">
    <property type="entry name" value="ZnF_A20"/>
    <property type="match status" value="1"/>
</dbReference>
<dbReference type="SMART" id="SM00154">
    <property type="entry name" value="ZnF_AN1"/>
    <property type="match status" value="1"/>
</dbReference>
<dbReference type="SUPFAM" id="SSF118310">
    <property type="entry name" value="AN1-like Zinc finger"/>
    <property type="match status" value="1"/>
</dbReference>
<dbReference type="SUPFAM" id="SSF57716">
    <property type="entry name" value="Glucocorticoid receptor-like (DNA-binding domain)"/>
    <property type="match status" value="1"/>
</dbReference>
<dbReference type="PROSITE" id="PS51036">
    <property type="entry name" value="ZF_A20"/>
    <property type="match status" value="1"/>
</dbReference>
<dbReference type="PROSITE" id="PS51039">
    <property type="entry name" value="ZF_AN1"/>
    <property type="match status" value="1"/>
</dbReference>
<evidence type="ECO:0000250" key="1"/>
<evidence type="ECO:0000250" key="2">
    <source>
        <dbReference type="UniProtKB" id="O88878"/>
    </source>
</evidence>
<evidence type="ECO:0000255" key="3">
    <source>
        <dbReference type="PROSITE-ProRule" id="PRU00449"/>
    </source>
</evidence>
<evidence type="ECO:0000255" key="4">
    <source>
        <dbReference type="PROSITE-ProRule" id="PRU00451"/>
    </source>
</evidence>
<evidence type="ECO:0000256" key="5">
    <source>
        <dbReference type="SAM" id="MobiDB-lite"/>
    </source>
</evidence>
<evidence type="ECO:0000269" key="6">
    <source>
    </source>
</evidence>
<evidence type="ECO:0000269" key="7">
    <source>
    </source>
</evidence>
<evidence type="ECO:0007744" key="8">
    <source>
    </source>
</evidence>
<evidence type="ECO:0007744" key="9">
    <source>
    </source>
</evidence>
<evidence type="ECO:0007744" key="10">
    <source>
    </source>
</evidence>
<evidence type="ECO:0007744" key="11">
    <source>
    </source>
</evidence>
<reference key="1">
    <citation type="journal article" date="1998" name="Gene">
        <title>Identification and mutation analysis of a cochlear-expressed, zinc finger protein gene at the DFNB7/11 and dn hearing-loss loci on human chromosome 9q and mouse chromosome 19.</title>
        <authorList>
            <person name="Scott D.A."/>
            <person name="Greinwald J.H. Jr."/>
            <person name="Marietta J.R."/>
            <person name="Drury S."/>
            <person name="Swiderski R.E."/>
            <person name="Vinas A."/>
            <person name="DeAngelis M.M."/>
            <person name="Carmi R."/>
            <person name="Ramesh A."/>
            <person name="Kraft M.L."/>
            <person name="Elbedour K."/>
            <person name="Skworak A.B."/>
            <person name="Friedman R.A."/>
            <person name="Srikumari Srisailapathy C.R."/>
            <person name="Verhoeven K."/>
            <person name="Van Camp G."/>
            <person name="Lovett M."/>
            <person name="Deininger P.L."/>
            <person name="Batzer M.A."/>
            <person name="Morton C.C."/>
            <person name="Keats B.J."/>
            <person name="Smith R.J.H."/>
            <person name="Sheffield V.C."/>
        </authorList>
    </citation>
    <scope>NUCLEOTIDE SEQUENCE [GENOMIC DNA / MRNA]</scope>
    <scope>TISSUE SPECIFICITY</scope>
</reference>
<reference key="2">
    <citation type="journal article" date="2004" name="Nat. Genet.">
        <title>Complete sequencing and characterization of 21,243 full-length human cDNAs.</title>
        <authorList>
            <person name="Ota T."/>
            <person name="Suzuki Y."/>
            <person name="Nishikawa T."/>
            <person name="Otsuki T."/>
            <person name="Sugiyama T."/>
            <person name="Irie R."/>
            <person name="Wakamatsu A."/>
            <person name="Hayashi K."/>
            <person name="Sato H."/>
            <person name="Nagai K."/>
            <person name="Kimura K."/>
            <person name="Makita H."/>
            <person name="Sekine M."/>
            <person name="Obayashi M."/>
            <person name="Nishi T."/>
            <person name="Shibahara T."/>
            <person name="Tanaka T."/>
            <person name="Ishii S."/>
            <person name="Yamamoto J."/>
            <person name="Saito K."/>
            <person name="Kawai Y."/>
            <person name="Isono Y."/>
            <person name="Nakamura Y."/>
            <person name="Nagahari K."/>
            <person name="Murakami K."/>
            <person name="Yasuda T."/>
            <person name="Iwayanagi T."/>
            <person name="Wagatsuma M."/>
            <person name="Shiratori A."/>
            <person name="Sudo H."/>
            <person name="Hosoiri T."/>
            <person name="Kaku Y."/>
            <person name="Kodaira H."/>
            <person name="Kondo H."/>
            <person name="Sugawara M."/>
            <person name="Takahashi M."/>
            <person name="Kanda K."/>
            <person name="Yokoi T."/>
            <person name="Furuya T."/>
            <person name="Kikkawa E."/>
            <person name="Omura Y."/>
            <person name="Abe K."/>
            <person name="Kamihara K."/>
            <person name="Katsuta N."/>
            <person name="Sato K."/>
            <person name="Tanikawa M."/>
            <person name="Yamazaki M."/>
            <person name="Ninomiya K."/>
            <person name="Ishibashi T."/>
            <person name="Yamashita H."/>
            <person name="Murakawa K."/>
            <person name="Fujimori K."/>
            <person name="Tanai H."/>
            <person name="Kimata M."/>
            <person name="Watanabe M."/>
            <person name="Hiraoka S."/>
            <person name="Chiba Y."/>
            <person name="Ishida S."/>
            <person name="Ono Y."/>
            <person name="Takiguchi S."/>
            <person name="Watanabe S."/>
            <person name="Yosida M."/>
            <person name="Hotuta T."/>
            <person name="Kusano J."/>
            <person name="Kanehori K."/>
            <person name="Takahashi-Fujii A."/>
            <person name="Hara H."/>
            <person name="Tanase T.-O."/>
            <person name="Nomura Y."/>
            <person name="Togiya S."/>
            <person name="Komai F."/>
            <person name="Hara R."/>
            <person name="Takeuchi K."/>
            <person name="Arita M."/>
            <person name="Imose N."/>
            <person name="Musashino K."/>
            <person name="Yuuki H."/>
            <person name="Oshima A."/>
            <person name="Sasaki N."/>
            <person name="Aotsuka S."/>
            <person name="Yoshikawa Y."/>
            <person name="Matsunawa H."/>
            <person name="Ichihara T."/>
            <person name="Shiohata N."/>
            <person name="Sano S."/>
            <person name="Moriya S."/>
            <person name="Momiyama H."/>
            <person name="Satoh N."/>
            <person name="Takami S."/>
            <person name="Terashima Y."/>
            <person name="Suzuki O."/>
            <person name="Nakagawa S."/>
            <person name="Senoh A."/>
            <person name="Mizoguchi H."/>
            <person name="Goto Y."/>
            <person name="Shimizu F."/>
            <person name="Wakebe H."/>
            <person name="Hishigaki H."/>
            <person name="Watanabe T."/>
            <person name="Sugiyama A."/>
            <person name="Takemoto M."/>
            <person name="Kawakami B."/>
            <person name="Yamazaki M."/>
            <person name="Watanabe K."/>
            <person name="Kumagai A."/>
            <person name="Itakura S."/>
            <person name="Fukuzumi Y."/>
            <person name="Fujimori Y."/>
            <person name="Komiyama M."/>
            <person name="Tashiro H."/>
            <person name="Tanigami A."/>
            <person name="Fujiwara T."/>
            <person name="Ono T."/>
            <person name="Yamada K."/>
            <person name="Fujii Y."/>
            <person name="Ozaki K."/>
            <person name="Hirao M."/>
            <person name="Ohmori Y."/>
            <person name="Kawabata A."/>
            <person name="Hikiji T."/>
            <person name="Kobatake N."/>
            <person name="Inagaki H."/>
            <person name="Ikema Y."/>
            <person name="Okamoto S."/>
            <person name="Okitani R."/>
            <person name="Kawakami T."/>
            <person name="Noguchi S."/>
            <person name="Itoh T."/>
            <person name="Shigeta K."/>
            <person name="Senba T."/>
            <person name="Matsumura K."/>
            <person name="Nakajima Y."/>
            <person name="Mizuno T."/>
            <person name="Morinaga M."/>
            <person name="Sasaki M."/>
            <person name="Togashi T."/>
            <person name="Oyama M."/>
            <person name="Hata H."/>
            <person name="Watanabe M."/>
            <person name="Komatsu T."/>
            <person name="Mizushima-Sugano J."/>
            <person name="Satoh T."/>
            <person name="Shirai Y."/>
            <person name="Takahashi Y."/>
            <person name="Nakagawa K."/>
            <person name="Okumura K."/>
            <person name="Nagase T."/>
            <person name="Nomura N."/>
            <person name="Kikuchi H."/>
            <person name="Masuho Y."/>
            <person name="Yamashita R."/>
            <person name="Nakai K."/>
            <person name="Yada T."/>
            <person name="Nakamura Y."/>
            <person name="Ohara O."/>
            <person name="Isogai T."/>
            <person name="Sugano S."/>
        </authorList>
    </citation>
    <scope>NUCLEOTIDE SEQUENCE [LARGE SCALE MRNA]</scope>
</reference>
<reference key="3">
    <citation type="journal article" date="2004" name="Nature">
        <title>DNA sequence and analysis of human chromosome 9.</title>
        <authorList>
            <person name="Humphray S.J."/>
            <person name="Oliver K."/>
            <person name="Hunt A.R."/>
            <person name="Plumb R.W."/>
            <person name="Loveland J.E."/>
            <person name="Howe K.L."/>
            <person name="Andrews T.D."/>
            <person name="Searle S."/>
            <person name="Hunt S.E."/>
            <person name="Scott C.E."/>
            <person name="Jones M.C."/>
            <person name="Ainscough R."/>
            <person name="Almeida J.P."/>
            <person name="Ambrose K.D."/>
            <person name="Ashwell R.I.S."/>
            <person name="Babbage A.K."/>
            <person name="Babbage S."/>
            <person name="Bagguley C.L."/>
            <person name="Bailey J."/>
            <person name="Banerjee R."/>
            <person name="Barker D.J."/>
            <person name="Barlow K.F."/>
            <person name="Bates K."/>
            <person name="Beasley H."/>
            <person name="Beasley O."/>
            <person name="Bird C.P."/>
            <person name="Bray-Allen S."/>
            <person name="Brown A.J."/>
            <person name="Brown J.Y."/>
            <person name="Burford D."/>
            <person name="Burrill W."/>
            <person name="Burton J."/>
            <person name="Carder C."/>
            <person name="Carter N.P."/>
            <person name="Chapman J.C."/>
            <person name="Chen Y."/>
            <person name="Clarke G."/>
            <person name="Clark S.Y."/>
            <person name="Clee C.M."/>
            <person name="Clegg S."/>
            <person name="Collier R.E."/>
            <person name="Corby N."/>
            <person name="Crosier M."/>
            <person name="Cummings A.T."/>
            <person name="Davies J."/>
            <person name="Dhami P."/>
            <person name="Dunn M."/>
            <person name="Dutta I."/>
            <person name="Dyer L.W."/>
            <person name="Earthrowl M.E."/>
            <person name="Faulkner L."/>
            <person name="Fleming C.J."/>
            <person name="Frankish A."/>
            <person name="Frankland J.A."/>
            <person name="French L."/>
            <person name="Fricker D.G."/>
            <person name="Garner P."/>
            <person name="Garnett J."/>
            <person name="Ghori J."/>
            <person name="Gilbert J.G.R."/>
            <person name="Glison C."/>
            <person name="Grafham D.V."/>
            <person name="Gribble S."/>
            <person name="Griffiths C."/>
            <person name="Griffiths-Jones S."/>
            <person name="Grocock R."/>
            <person name="Guy J."/>
            <person name="Hall R.E."/>
            <person name="Hammond S."/>
            <person name="Harley J.L."/>
            <person name="Harrison E.S.I."/>
            <person name="Hart E.A."/>
            <person name="Heath P.D."/>
            <person name="Henderson C.D."/>
            <person name="Hopkins B.L."/>
            <person name="Howard P.J."/>
            <person name="Howden P.J."/>
            <person name="Huckle E."/>
            <person name="Johnson C."/>
            <person name="Johnson D."/>
            <person name="Joy A.A."/>
            <person name="Kay M."/>
            <person name="Keenan S."/>
            <person name="Kershaw J.K."/>
            <person name="Kimberley A.M."/>
            <person name="King A."/>
            <person name="Knights A."/>
            <person name="Laird G.K."/>
            <person name="Langford C."/>
            <person name="Lawlor S."/>
            <person name="Leongamornlert D.A."/>
            <person name="Leversha M."/>
            <person name="Lloyd C."/>
            <person name="Lloyd D.M."/>
            <person name="Lovell J."/>
            <person name="Martin S."/>
            <person name="Mashreghi-Mohammadi M."/>
            <person name="Matthews L."/>
            <person name="McLaren S."/>
            <person name="McLay K.E."/>
            <person name="McMurray A."/>
            <person name="Milne S."/>
            <person name="Nickerson T."/>
            <person name="Nisbett J."/>
            <person name="Nordsiek G."/>
            <person name="Pearce A.V."/>
            <person name="Peck A.I."/>
            <person name="Porter K.M."/>
            <person name="Pandian R."/>
            <person name="Pelan S."/>
            <person name="Phillimore B."/>
            <person name="Povey S."/>
            <person name="Ramsey Y."/>
            <person name="Rand V."/>
            <person name="Scharfe M."/>
            <person name="Sehra H.K."/>
            <person name="Shownkeen R."/>
            <person name="Sims S.K."/>
            <person name="Skuce C.D."/>
            <person name="Smith M."/>
            <person name="Steward C.A."/>
            <person name="Swarbreck D."/>
            <person name="Sycamore N."/>
            <person name="Tester J."/>
            <person name="Thorpe A."/>
            <person name="Tracey A."/>
            <person name="Tromans A."/>
            <person name="Thomas D.W."/>
            <person name="Wall M."/>
            <person name="Wallis J.M."/>
            <person name="West A.P."/>
            <person name="Whitehead S.L."/>
            <person name="Willey D.L."/>
            <person name="Williams S.A."/>
            <person name="Wilming L."/>
            <person name="Wray P.W."/>
            <person name="Young L."/>
            <person name="Ashurst J.L."/>
            <person name="Coulson A."/>
            <person name="Blocker H."/>
            <person name="Durbin R.M."/>
            <person name="Sulston J.E."/>
            <person name="Hubbard T."/>
            <person name="Jackson M.J."/>
            <person name="Bentley D.R."/>
            <person name="Beck S."/>
            <person name="Rogers J."/>
            <person name="Dunham I."/>
        </authorList>
    </citation>
    <scope>NUCLEOTIDE SEQUENCE [LARGE SCALE GENOMIC DNA]</scope>
</reference>
<reference key="4">
    <citation type="submission" date="2005-07" db="EMBL/GenBank/DDBJ databases">
        <authorList>
            <person name="Mural R.J."/>
            <person name="Istrail S."/>
            <person name="Sutton G.G."/>
            <person name="Florea L."/>
            <person name="Halpern A.L."/>
            <person name="Mobarry C.M."/>
            <person name="Lippert R."/>
            <person name="Walenz B."/>
            <person name="Shatkay H."/>
            <person name="Dew I."/>
            <person name="Miller J.R."/>
            <person name="Flanigan M.J."/>
            <person name="Edwards N.J."/>
            <person name="Bolanos R."/>
            <person name="Fasulo D."/>
            <person name="Halldorsson B.V."/>
            <person name="Hannenhalli S."/>
            <person name="Turner R."/>
            <person name="Yooseph S."/>
            <person name="Lu F."/>
            <person name="Nusskern D.R."/>
            <person name="Shue B.C."/>
            <person name="Zheng X.H."/>
            <person name="Zhong F."/>
            <person name="Delcher A.L."/>
            <person name="Huson D.H."/>
            <person name="Kravitz S.A."/>
            <person name="Mouchard L."/>
            <person name="Reinert K."/>
            <person name="Remington K.A."/>
            <person name="Clark A.G."/>
            <person name="Waterman M.S."/>
            <person name="Eichler E.E."/>
            <person name="Adams M.D."/>
            <person name="Hunkapiller M.W."/>
            <person name="Myers E.W."/>
            <person name="Venter J.C."/>
        </authorList>
    </citation>
    <scope>NUCLEOTIDE SEQUENCE [LARGE SCALE GENOMIC DNA]</scope>
</reference>
<reference key="5">
    <citation type="journal article" date="2004" name="Genome Res.">
        <title>The status, quality, and expansion of the NIH full-length cDNA project: the Mammalian Gene Collection (MGC).</title>
        <authorList>
            <consortium name="The MGC Project Team"/>
        </authorList>
    </citation>
    <scope>NUCLEOTIDE SEQUENCE [LARGE SCALE MRNA]</scope>
    <source>
        <tissue>Eye</tissue>
        <tissue>Lung</tissue>
        <tissue>Skin</tissue>
    </source>
</reference>
<reference key="6">
    <citation type="journal article" date="2004" name="J. Biol. Chem.">
        <title>ZNF216 is an A20-like and IkappaB kinase gamma-interacting inhibitor of NFkappaB activation.</title>
        <authorList>
            <person name="Huang J."/>
            <person name="Teng L."/>
            <person name="Li L."/>
            <person name="Liu T."/>
            <person name="Li L."/>
            <person name="Chen D."/>
            <person name="Xu L.-G."/>
            <person name="Zhai Z."/>
            <person name="Shu H.-B."/>
        </authorList>
    </citation>
    <scope>TISSUE SPECIFICITY</scope>
    <scope>INTERACTION WITH IKBKG; RIPK1 AND TRAF6</scope>
    <scope>FUNCTION</scope>
</reference>
<reference key="7">
    <citation type="journal article" date="2008" name="Proc. Natl. Acad. Sci. U.S.A.">
        <title>A quantitative atlas of mitotic phosphorylation.</title>
        <authorList>
            <person name="Dephoure N."/>
            <person name="Zhou C."/>
            <person name="Villen J."/>
            <person name="Beausoleil S.A."/>
            <person name="Bakalarski C.E."/>
            <person name="Elledge S.J."/>
            <person name="Gygi S.P."/>
        </authorList>
    </citation>
    <scope>PHOSPHORYLATION [LARGE SCALE ANALYSIS] AT SER-48</scope>
    <scope>IDENTIFICATION BY MASS SPECTROMETRY [LARGE SCALE ANALYSIS]</scope>
    <source>
        <tissue>Cervix carcinoma</tissue>
    </source>
</reference>
<reference key="8">
    <citation type="journal article" date="2009" name="Anal. Chem.">
        <title>Lys-N and trypsin cover complementary parts of the phosphoproteome in a refined SCX-based approach.</title>
        <authorList>
            <person name="Gauci S."/>
            <person name="Helbig A.O."/>
            <person name="Slijper M."/>
            <person name="Krijgsveld J."/>
            <person name="Heck A.J."/>
            <person name="Mohammed S."/>
        </authorList>
    </citation>
    <scope>IDENTIFICATION BY MASS SPECTROMETRY [LARGE SCALE ANALYSIS]</scope>
</reference>
<reference key="9">
    <citation type="journal article" date="2009" name="Sci. Signal.">
        <title>Quantitative phosphoproteomic analysis of T cell receptor signaling reveals system-wide modulation of protein-protein interactions.</title>
        <authorList>
            <person name="Mayya V."/>
            <person name="Lundgren D.H."/>
            <person name="Hwang S.-I."/>
            <person name="Rezaul K."/>
            <person name="Wu L."/>
            <person name="Eng J.K."/>
            <person name="Rodionov V."/>
            <person name="Han D.K."/>
        </authorList>
    </citation>
    <scope>PHOSPHORYLATION [LARGE SCALE ANALYSIS] AT SER-48</scope>
    <scope>IDENTIFICATION BY MASS SPECTROMETRY [LARGE SCALE ANALYSIS]</scope>
    <source>
        <tissue>Leukemic T-cell</tissue>
    </source>
</reference>
<reference key="10">
    <citation type="journal article" date="2010" name="Sci. Signal.">
        <title>Quantitative phosphoproteomics reveals widespread full phosphorylation site occupancy during mitosis.</title>
        <authorList>
            <person name="Olsen J.V."/>
            <person name="Vermeulen M."/>
            <person name="Santamaria A."/>
            <person name="Kumar C."/>
            <person name="Miller M.L."/>
            <person name="Jensen L.J."/>
            <person name="Gnad F."/>
            <person name="Cox J."/>
            <person name="Jensen T.S."/>
            <person name="Nigg E.A."/>
            <person name="Brunak S."/>
            <person name="Mann M."/>
        </authorList>
    </citation>
    <scope>PHOSPHORYLATION [LARGE SCALE ANALYSIS] AT SER-48</scope>
    <scope>IDENTIFICATION BY MASS SPECTROMETRY [LARGE SCALE ANALYSIS]</scope>
    <source>
        <tissue>Cervix carcinoma</tissue>
    </source>
</reference>
<reference key="11">
    <citation type="journal article" date="2011" name="Sci. Signal.">
        <title>System-wide temporal characterization of the proteome and phosphoproteome of human embryonic stem cell differentiation.</title>
        <authorList>
            <person name="Rigbolt K.T."/>
            <person name="Prokhorova T.A."/>
            <person name="Akimov V."/>
            <person name="Henningsen J."/>
            <person name="Johansen P.T."/>
            <person name="Kratchmarova I."/>
            <person name="Kassem M."/>
            <person name="Mann M."/>
            <person name="Olsen J.V."/>
            <person name="Blagoev B."/>
        </authorList>
    </citation>
    <scope>IDENTIFICATION BY MASS SPECTROMETRY [LARGE SCALE ANALYSIS]</scope>
</reference>
<reference key="12">
    <citation type="journal article" date="2013" name="J. Proteome Res.">
        <title>Toward a comprehensive characterization of a human cancer cell phosphoproteome.</title>
        <authorList>
            <person name="Zhou H."/>
            <person name="Di Palma S."/>
            <person name="Preisinger C."/>
            <person name="Peng M."/>
            <person name="Polat A.N."/>
            <person name="Heck A.J."/>
            <person name="Mohammed S."/>
        </authorList>
    </citation>
    <scope>PHOSPHORYLATION [LARGE SCALE ANALYSIS] AT SER-48</scope>
    <scope>IDENTIFICATION BY MASS SPECTROMETRY [LARGE SCALE ANALYSIS]</scope>
    <source>
        <tissue>Cervix carcinoma</tissue>
        <tissue>Erythroleukemia</tissue>
    </source>
</reference>
<feature type="chain" id="PRO_0000066557" description="AN1-type zinc finger protein 5">
    <location>
        <begin position="1"/>
        <end position="213"/>
    </location>
</feature>
<feature type="zinc finger region" description="A20-type" evidence="4">
    <location>
        <begin position="8"/>
        <end position="42"/>
    </location>
</feature>
<feature type="zinc finger region" description="AN1-type" evidence="3">
    <location>
        <begin position="148"/>
        <end position="194"/>
    </location>
</feature>
<feature type="region of interest" description="Disordered" evidence="5">
    <location>
        <begin position="39"/>
        <end position="149"/>
    </location>
</feature>
<feature type="compositionally biased region" description="Polar residues" evidence="5">
    <location>
        <begin position="40"/>
        <end position="75"/>
    </location>
</feature>
<feature type="compositionally biased region" description="Low complexity" evidence="5">
    <location>
        <begin position="120"/>
        <end position="138"/>
    </location>
</feature>
<feature type="compositionally biased region" description="Basic and acidic residues" evidence="5">
    <location>
        <begin position="139"/>
        <end position="148"/>
    </location>
</feature>
<feature type="binding site" evidence="4">
    <location>
        <position position="14"/>
    </location>
    <ligand>
        <name>Zn(2+)</name>
        <dbReference type="ChEBI" id="CHEBI:29105"/>
        <label>1</label>
    </ligand>
</feature>
<feature type="binding site" evidence="4">
    <location>
        <position position="18"/>
    </location>
    <ligand>
        <name>Zn(2+)</name>
        <dbReference type="ChEBI" id="CHEBI:29105"/>
        <label>1</label>
    </ligand>
</feature>
<feature type="binding site" evidence="4">
    <location>
        <position position="30"/>
    </location>
    <ligand>
        <name>Zn(2+)</name>
        <dbReference type="ChEBI" id="CHEBI:29105"/>
        <label>1</label>
    </ligand>
</feature>
<feature type="binding site" evidence="4">
    <location>
        <position position="33"/>
    </location>
    <ligand>
        <name>Zn(2+)</name>
        <dbReference type="ChEBI" id="CHEBI:29105"/>
        <label>1</label>
    </ligand>
</feature>
<feature type="binding site" evidence="3">
    <location>
        <position position="154"/>
    </location>
    <ligand>
        <name>Zn(2+)</name>
        <dbReference type="ChEBI" id="CHEBI:29105"/>
        <label>2</label>
    </ligand>
</feature>
<feature type="binding site" evidence="3">
    <location>
        <position position="157"/>
    </location>
    <ligand>
        <name>Zn(2+)</name>
        <dbReference type="ChEBI" id="CHEBI:29105"/>
        <label>2</label>
    </ligand>
</feature>
<feature type="binding site" evidence="3">
    <location>
        <position position="168"/>
    </location>
    <ligand>
        <name>Zn(2+)</name>
        <dbReference type="ChEBI" id="CHEBI:29105"/>
        <label>3</label>
    </ligand>
</feature>
<feature type="binding site" evidence="3">
    <location>
        <position position="170"/>
    </location>
    <ligand>
        <name>Zn(2+)</name>
        <dbReference type="ChEBI" id="CHEBI:29105"/>
        <label>3</label>
    </ligand>
</feature>
<feature type="binding site" evidence="3">
    <location>
        <position position="175"/>
    </location>
    <ligand>
        <name>Zn(2+)</name>
        <dbReference type="ChEBI" id="CHEBI:29105"/>
        <label>2</label>
    </ligand>
</feature>
<feature type="binding site" evidence="3">
    <location>
        <position position="178"/>
    </location>
    <ligand>
        <name>Zn(2+)</name>
        <dbReference type="ChEBI" id="CHEBI:29105"/>
        <label>2</label>
    </ligand>
</feature>
<feature type="binding site" evidence="3">
    <location>
        <position position="184"/>
    </location>
    <ligand>
        <name>Zn(2+)</name>
        <dbReference type="ChEBI" id="CHEBI:29105"/>
        <label>3</label>
    </ligand>
</feature>
<feature type="binding site" evidence="3">
    <location>
        <position position="186"/>
    </location>
    <ligand>
        <name>Zn(2+)</name>
        <dbReference type="ChEBI" id="CHEBI:29105"/>
        <label>3</label>
    </ligand>
</feature>
<feature type="modified residue" description="Phosphoserine" evidence="8 9 10 11">
    <location>
        <position position="48"/>
    </location>
</feature>
<feature type="modified residue" description="Phosphoserine" evidence="2">
    <location>
        <position position="58"/>
    </location>
</feature>
<feature type="modified residue" description="N6-acetyllysine" evidence="2">
    <location>
        <position position="209"/>
    </location>
</feature>